<gene>
    <name evidence="1 6" type="primary">sasA</name>
    <name type="ordered locus">tlr0029</name>
</gene>
<reference evidence="9" key="1">
    <citation type="journal article" date="2002" name="DNA Res.">
        <title>Complete genome structure of the thermophilic cyanobacterium Thermosynechococcus elongatus BP-1.</title>
        <authorList>
            <person name="Nakamura Y."/>
            <person name="Kaneko T."/>
            <person name="Sato S."/>
            <person name="Ikeuchi M."/>
            <person name="Katoh H."/>
            <person name="Sasamoto S."/>
            <person name="Watanabe A."/>
            <person name="Iriguchi M."/>
            <person name="Kawashima K."/>
            <person name="Kimura T."/>
            <person name="Kishida Y."/>
            <person name="Kiyokawa C."/>
            <person name="Kohara M."/>
            <person name="Matsumoto M."/>
            <person name="Matsuno A."/>
            <person name="Nakazaki N."/>
            <person name="Shimpo S."/>
            <person name="Sugimoto M."/>
            <person name="Takeuchi C."/>
            <person name="Yamada M."/>
            <person name="Tabata S."/>
        </authorList>
    </citation>
    <scope>NUCLEOTIDE SEQUENCE [LARGE SCALE GENOMIC DNA]</scope>
    <source>
        <strain>NIES-2133 / IAM M-273 / BP-1</strain>
    </source>
</reference>
<reference key="2">
    <citation type="journal article" date="2012" name="Genes Cells">
        <title>Phase-dependent generation and transmission of time information by the KaiABC circadian clock oscillator through SasA-KaiC interaction in cyanobacteria.</title>
        <authorList>
            <person name="Valencia S.J."/>
            <person name="Bitou K."/>
            <person name="Ishii K."/>
            <person name="Murakami R."/>
            <person name="Morishita M."/>
            <person name="Onai K."/>
            <person name="Furukawa Y."/>
            <person name="Imada K."/>
            <person name="Namba K."/>
            <person name="Ishiura M."/>
        </authorList>
    </citation>
    <scope>FUNCTION</scope>
    <scope>CATALYTIC ACTIVITY</scope>
    <scope>INTERACTION WITH KAIC</scope>
    <scope>SUBUNIT</scope>
    <scope>DOMAIN</scope>
    <scope>PROBABLE PHOSPHORYLATION AT HIS-160</scope>
    <scope>MUTAGENESIS OF HIS-160</scope>
    <source>
        <strain>NIES-2133 / IAM M-273 / BP-1</strain>
    </source>
</reference>
<reference key="3">
    <citation type="journal article" date="2014" name="J. Mol. Biol.">
        <title>Cooperative KaiA-KaiB-KaiC interactions affect KaiB/SasA competition in the circadian clock of cyanobacteria.</title>
        <authorList>
            <person name="Tseng R."/>
            <person name="Chang Y.G."/>
            <person name="Bravo I."/>
            <person name="Latham R."/>
            <person name="Chaudhary A."/>
            <person name="Kuo N.W."/>
            <person name="Liwang A."/>
        </authorList>
    </citation>
    <scope>SUBUNIT</scope>
    <source>
        <strain>NIES-2133 / IAM M-273 / BP-1</strain>
    </source>
</reference>
<reference key="4">
    <citation type="journal article" date="2015" name="Science">
        <title>Circadian rhythms. A protein fold switch joins the circadian oscillator to clock output in cyanobacteria.</title>
        <authorList>
            <person name="Chang Y.G."/>
            <person name="Cohen S.E."/>
            <person name="Phong C."/>
            <person name="Myers W.K."/>
            <person name="Kim Y.I."/>
            <person name="Tseng R."/>
            <person name="Lin J."/>
            <person name="Zhang L."/>
            <person name="Boyd J.S."/>
            <person name="Lee Y."/>
            <person name="Kang S."/>
            <person name="Lee D."/>
            <person name="Li S."/>
            <person name="Britt R.D."/>
            <person name="Rust M.J."/>
            <person name="Golden S.S."/>
            <person name="LiWang A."/>
        </authorList>
    </citation>
    <scope>SUBUNIT</scope>
    <source>
        <strain>NIES-2133 / IAM M-273 / BP-1</strain>
    </source>
</reference>
<reference evidence="10" key="5">
    <citation type="journal article" date="2021" name="Science">
        <title>Reconstitution of an intact clock reveals mechanisms of circadian timekeeping.</title>
        <authorList>
            <person name="Chavan A.G."/>
            <person name="Swan J.A."/>
            <person name="Heisler J."/>
            <person name="Sancar C."/>
            <person name="Ernst D.C."/>
            <person name="Fang M."/>
            <person name="Palacios J.G."/>
            <person name="Spangler R.K."/>
            <person name="Bagshaw C.R."/>
            <person name="Tripathi S."/>
            <person name="Crosby P."/>
            <person name="Golden S.S."/>
            <person name="Partch C.L."/>
            <person name="LiWang A."/>
        </authorList>
    </citation>
    <scope>X-RAY CRYSTALLOGRAPHY (3.20 ANGSTROMS) OF 16-107 IN COMPLEX WITH KAIC CI DOMAIN</scope>
    <source>
        <strain>NIES-2133 / IAM M-273 / BP-1</strain>
    </source>
</reference>
<evidence type="ECO:0000255" key="1">
    <source>
        <dbReference type="HAMAP-Rule" id="MF_01837"/>
    </source>
</evidence>
<evidence type="ECO:0000269" key="2">
    <source>
    </source>
</evidence>
<evidence type="ECO:0000269" key="3">
    <source>
    </source>
</evidence>
<evidence type="ECO:0000269" key="4">
    <source>
    </source>
</evidence>
<evidence type="ECO:0000269" key="5">
    <source>
    </source>
</evidence>
<evidence type="ECO:0000303" key="6">
    <source>
    </source>
</evidence>
<evidence type="ECO:0000305" key="7">
    <source>
    </source>
</evidence>
<evidence type="ECO:0000305" key="8">
    <source>
    </source>
</evidence>
<evidence type="ECO:0000312" key="9">
    <source>
        <dbReference type="EMBL" id="BAC07582.1"/>
    </source>
</evidence>
<evidence type="ECO:0007744" key="10">
    <source>
        <dbReference type="PDB" id="6X61"/>
    </source>
</evidence>
<evidence type="ECO:0007829" key="11">
    <source>
        <dbReference type="PDB" id="6X61"/>
    </source>
</evidence>
<protein>
    <recommendedName>
        <fullName evidence="1">Adaptive-response sensory kinase SasA</fullName>
        <ecNumber evidence="1 2">2.7.13.3</ecNumber>
    </recommendedName>
    <alternativeName>
        <fullName evidence="1 6">Sensor histidine kinase SasA</fullName>
    </alternativeName>
</protein>
<proteinExistence type="evidence at protein level"/>
<name>SASA_THEVB</name>
<comment type="function">
    <text evidence="1">Member of the two-component regulatory system SasA/RpaA involved in genome-wide circadian gene expression. One of several clock output pathways. Participates in the Kai clock protein complex, the main circadian regulator in cyanobacteria, via its interaction with KaiC. KaiC enhances the autophosphorylation activity of SasA, which then transfers its phosphate group to RpaA to activate it. In addition to its output function, recruits fold-shifted KaiB (KaiB(fs)) to KaiC to cooperatively form the KaiB(6):KaiC(6) complex (independent of SasA kinase activity). Required for robustness of the circadian rhythm of gene expression and is involved in clock output, also required for adaptation to light/dark cycles.</text>
</comment>
<comment type="catalytic activity">
    <reaction evidence="1 2">
        <text>ATP + protein L-histidine = ADP + protein N-phospho-L-histidine.</text>
        <dbReference type="EC" id="2.7.13.3"/>
    </reaction>
</comment>
<comment type="subunit">
    <text evidence="2 3 4 5 8">Homotrimer with a small amount of possible homohexamer; a protein fragment of 109-380 is also a homotrimer. Interacts with KaiC, probably as 1 SasA trimer:1 KaiC homohexamer; unphosphorylated SasA has the highest affinity (PubMed:22512339). Homodimer (Probable) (PubMed:34618577). Binds to the B-loop in the CI domain of KaiC; SasA and KaiB(fs) compete to bind to the CI domain (PubMed:24112939, PubMed:26113641, PubMed:34618577). Binds preferentially to doubly phosphorylated KaiC (PubMed:34618577).</text>
</comment>
<comment type="domain">
    <text evidence="2">The N-terminus (residues 1-108) interacts with KaiC, while the C-terminus (109-380) autophosphorylates and is probably responsible for self-association. The N-terminal domain stimulates the C-terminus to autophosphorylate; KaiC does not stimulate autophosphorylation of the C-terminal domain.</text>
</comment>
<comment type="PTM">
    <text evidence="7">Autophosphorylates, probably on His-160.</text>
</comment>
<sequence>MKASADASSPQETTPPLSLLLFVANRPGDEEETAAIQAHIQQLPSNFSFELKVVPIGEQPYLLEEYKLVATPALIKVRPEPRQTLAGRKLLQKVDYWWPRWQREVALGLQADMQKSAAEQSDCSMELSRLKDELFQLRQERDRLAEQLQFKDRIISLLAHELRNPLTAGGIALETLESNLQEESSQQLPIEDIQRLFHHARSQTQTMGQLITDLLLAARGPQDKLQIMARQLDLRQLCQETVEDVRLNFERKKQHFTTDIPLDLPLVYGDGDRIRQVLVNLLDNACKYTPEGGKIHLSAFHRMTQKVQVTVSDTGPGIPIEQQEKIFGETVRLDRDRAIEGYGIGLALCRQIIRMHYGQIWVDSQPGKGSCFHFTLPVYS</sequence>
<accession>Q8DMT2</accession>
<keyword id="KW-0002">3D-structure</keyword>
<keyword id="KW-0067">ATP-binding</keyword>
<keyword id="KW-0090">Biological rhythms</keyword>
<keyword id="KW-0418">Kinase</keyword>
<keyword id="KW-0547">Nucleotide-binding</keyword>
<keyword id="KW-0597">Phosphoprotein</keyword>
<keyword id="KW-1185">Reference proteome</keyword>
<keyword id="KW-0808">Transferase</keyword>
<keyword id="KW-0902">Two-component regulatory system</keyword>
<dbReference type="EC" id="2.7.13.3" evidence="1 2"/>
<dbReference type="EMBL" id="BA000039">
    <property type="protein sequence ID" value="BAC07582.1"/>
    <property type="molecule type" value="Genomic_DNA"/>
</dbReference>
<dbReference type="RefSeq" id="NP_680820.1">
    <property type="nucleotide sequence ID" value="NC_004113.1"/>
</dbReference>
<dbReference type="RefSeq" id="WP_011055884.1">
    <property type="nucleotide sequence ID" value="NC_004113.1"/>
</dbReference>
<dbReference type="PDB" id="6X61">
    <property type="method" value="X-ray"/>
    <property type="resolution" value="3.20 A"/>
    <property type="chains" value="B/D/F/H/J/L=16-107"/>
</dbReference>
<dbReference type="PDBsum" id="6X61"/>
<dbReference type="SMR" id="Q8DMT2"/>
<dbReference type="STRING" id="197221.gene:10746607"/>
<dbReference type="iPTMnet" id="Q8DMT2"/>
<dbReference type="EnsemblBacteria" id="BAC07582">
    <property type="protein sequence ID" value="BAC07582"/>
    <property type="gene ID" value="BAC07582"/>
</dbReference>
<dbReference type="KEGG" id="tel:tlr0029"/>
<dbReference type="PATRIC" id="fig|197221.4.peg.28"/>
<dbReference type="eggNOG" id="COG2205">
    <property type="taxonomic scope" value="Bacteria"/>
</dbReference>
<dbReference type="Proteomes" id="UP000000440">
    <property type="component" value="Chromosome"/>
</dbReference>
<dbReference type="GO" id="GO:0005886">
    <property type="term" value="C:plasma membrane"/>
    <property type="evidence" value="ECO:0007669"/>
    <property type="project" value="TreeGrafter"/>
</dbReference>
<dbReference type="GO" id="GO:0005524">
    <property type="term" value="F:ATP binding"/>
    <property type="evidence" value="ECO:0007669"/>
    <property type="project" value="UniProtKB-KW"/>
</dbReference>
<dbReference type="GO" id="GO:0009927">
    <property type="term" value="F:histidine phosphotransfer kinase activity"/>
    <property type="evidence" value="ECO:0007669"/>
    <property type="project" value="TreeGrafter"/>
</dbReference>
<dbReference type="GO" id="GO:0000155">
    <property type="term" value="F:phosphorelay sensor kinase activity"/>
    <property type="evidence" value="ECO:0007669"/>
    <property type="project" value="InterPro"/>
</dbReference>
<dbReference type="GO" id="GO:0007623">
    <property type="term" value="P:circadian rhythm"/>
    <property type="evidence" value="ECO:0000314"/>
    <property type="project" value="UniProtKB"/>
</dbReference>
<dbReference type="CDD" id="cd00082">
    <property type="entry name" value="HisKA"/>
    <property type="match status" value="1"/>
</dbReference>
<dbReference type="CDD" id="cd02978">
    <property type="entry name" value="KaiB_like"/>
    <property type="match status" value="1"/>
</dbReference>
<dbReference type="FunFam" id="3.30.565.10:FF:000006">
    <property type="entry name" value="Sensor histidine kinase WalK"/>
    <property type="match status" value="1"/>
</dbReference>
<dbReference type="Gene3D" id="1.10.287.130">
    <property type="match status" value="1"/>
</dbReference>
<dbReference type="Gene3D" id="3.40.30.10">
    <property type="entry name" value="Glutaredoxin"/>
    <property type="match status" value="1"/>
</dbReference>
<dbReference type="Gene3D" id="3.30.565.10">
    <property type="entry name" value="Histidine kinase-like ATPase, C-terminal domain"/>
    <property type="match status" value="1"/>
</dbReference>
<dbReference type="HAMAP" id="MF_01837">
    <property type="entry name" value="Kinase_SasA"/>
    <property type="match status" value="1"/>
</dbReference>
<dbReference type="InterPro" id="IPR036890">
    <property type="entry name" value="HATPase_C_sf"/>
</dbReference>
<dbReference type="InterPro" id="IPR005467">
    <property type="entry name" value="His_kinase_dom"/>
</dbReference>
<dbReference type="InterPro" id="IPR003661">
    <property type="entry name" value="HisK_dim/P_dom"/>
</dbReference>
<dbReference type="InterPro" id="IPR036097">
    <property type="entry name" value="HisK_dim/P_sf"/>
</dbReference>
<dbReference type="InterPro" id="IPR011649">
    <property type="entry name" value="KaiB_domain"/>
</dbReference>
<dbReference type="InterPro" id="IPR023527">
    <property type="entry name" value="Kinase_SasA"/>
</dbReference>
<dbReference type="InterPro" id="IPR004358">
    <property type="entry name" value="Sig_transdc_His_kin-like_C"/>
</dbReference>
<dbReference type="InterPro" id="IPR036249">
    <property type="entry name" value="Thioredoxin-like_sf"/>
</dbReference>
<dbReference type="NCBIfam" id="NF006800">
    <property type="entry name" value="PRK09303.1"/>
    <property type="match status" value="1"/>
</dbReference>
<dbReference type="PANTHER" id="PTHR43047:SF72">
    <property type="entry name" value="OSMOSENSING HISTIDINE PROTEIN KINASE SLN1"/>
    <property type="match status" value="1"/>
</dbReference>
<dbReference type="PANTHER" id="PTHR43047">
    <property type="entry name" value="TWO-COMPONENT HISTIDINE PROTEIN KINASE"/>
    <property type="match status" value="1"/>
</dbReference>
<dbReference type="Pfam" id="PF02518">
    <property type="entry name" value="HATPase_c"/>
    <property type="match status" value="1"/>
</dbReference>
<dbReference type="Pfam" id="PF00512">
    <property type="entry name" value="HisKA"/>
    <property type="match status" value="1"/>
</dbReference>
<dbReference type="Pfam" id="PF07689">
    <property type="entry name" value="KaiB"/>
    <property type="match status" value="1"/>
</dbReference>
<dbReference type="PRINTS" id="PR00344">
    <property type="entry name" value="BCTRLSENSOR"/>
</dbReference>
<dbReference type="SMART" id="SM00387">
    <property type="entry name" value="HATPase_c"/>
    <property type="match status" value="1"/>
</dbReference>
<dbReference type="SMART" id="SM00388">
    <property type="entry name" value="HisKA"/>
    <property type="match status" value="1"/>
</dbReference>
<dbReference type="SMART" id="SM01248">
    <property type="entry name" value="KaiB"/>
    <property type="match status" value="1"/>
</dbReference>
<dbReference type="SUPFAM" id="SSF55874">
    <property type="entry name" value="ATPase domain of HSP90 chaperone/DNA topoisomerase II/histidine kinase"/>
    <property type="match status" value="1"/>
</dbReference>
<dbReference type="SUPFAM" id="SSF47384">
    <property type="entry name" value="Homodimeric domain of signal transducing histidine kinase"/>
    <property type="match status" value="1"/>
</dbReference>
<dbReference type="SUPFAM" id="SSF52833">
    <property type="entry name" value="Thioredoxin-like"/>
    <property type="match status" value="1"/>
</dbReference>
<dbReference type="PROSITE" id="PS50109">
    <property type="entry name" value="HIS_KIN"/>
    <property type="match status" value="1"/>
</dbReference>
<feature type="chain" id="PRO_0000074871" description="Adaptive-response sensory kinase SasA">
    <location>
        <begin position="1"/>
        <end position="380"/>
    </location>
</feature>
<feature type="domain" description="Histidine kinase" evidence="1">
    <location>
        <begin position="157"/>
        <end position="380"/>
    </location>
</feature>
<feature type="region of interest" description="KaiB-like domain, interacts with KaiC" evidence="7">
    <location>
        <begin position="20"/>
        <end position="101"/>
    </location>
</feature>
<feature type="modified residue" description="Phosphohistidine; by autocatalysis" evidence="1 7">
    <location>
        <position position="160"/>
    </location>
</feature>
<feature type="mutagenesis site" description="No autophosphorylation, no change in oligomerization, no change in stability." evidence="2">
    <original>H</original>
    <variation>A</variation>
    <location>
        <position position="160"/>
    </location>
</feature>
<feature type="mutagenesis site" description="No autophosphorylation, more protein is hexameric, no change in stability, simulates phosphorylated protein." evidence="2">
    <original>H</original>
    <variation>D</variation>
    <location>
        <position position="160"/>
    </location>
</feature>
<feature type="strand" evidence="11">
    <location>
        <begin position="19"/>
        <end position="23"/>
    </location>
</feature>
<feature type="helix" evidence="11">
    <location>
        <begin position="29"/>
        <end position="41"/>
    </location>
</feature>
<feature type="strand" evidence="11">
    <location>
        <begin position="52"/>
        <end position="55"/>
    </location>
</feature>
<feature type="turn" evidence="11">
    <location>
        <begin position="56"/>
        <end position="58"/>
    </location>
</feature>
<feature type="helix" evidence="11">
    <location>
        <begin position="60"/>
        <end position="65"/>
    </location>
</feature>
<feature type="strand" evidence="11">
    <location>
        <begin position="70"/>
        <end position="76"/>
    </location>
</feature>
<feature type="strand" evidence="11">
    <location>
        <begin position="78"/>
        <end position="81"/>
    </location>
</feature>
<feature type="strand" evidence="11">
    <location>
        <begin position="83"/>
        <end position="87"/>
    </location>
</feature>
<feature type="helix" evidence="11">
    <location>
        <begin position="90"/>
        <end position="97"/>
    </location>
</feature>
<feature type="turn" evidence="11">
    <location>
        <begin position="98"/>
        <end position="101"/>
    </location>
</feature>
<organism>
    <name type="scientific">Thermosynechococcus vestitus (strain NIES-2133 / IAM M-273 / BP-1)</name>
    <dbReference type="NCBI Taxonomy" id="197221"/>
    <lineage>
        <taxon>Bacteria</taxon>
        <taxon>Bacillati</taxon>
        <taxon>Cyanobacteriota</taxon>
        <taxon>Cyanophyceae</taxon>
        <taxon>Acaryochloridales</taxon>
        <taxon>Thermosynechococcaceae</taxon>
        <taxon>Thermosynechococcus</taxon>
    </lineage>
</organism>